<organismHost>
    <name type="scientific">Homo sapiens</name>
    <name type="common">Human</name>
    <dbReference type="NCBI Taxonomy" id="9606"/>
</organismHost>
<evidence type="ECO:0000256" key="1">
    <source>
        <dbReference type="SAM" id="MobiDB-lite"/>
    </source>
</evidence>
<protein>
    <recommendedName>
        <fullName>Uncharacterized 7.3 kDa protein in 100 kDa protein region</fullName>
    </recommendedName>
</protein>
<reference key="1">
    <citation type="journal article" date="1990" name="Nucleic Acids Res.">
        <title>Nucleotide sequence of the region coding for 100K and 33K proteins of human enteric adenovirus type 41 (Tak).</title>
        <authorList>
            <person name="Slemenda S.B."/>
            <person name="Pieniazek N.J."/>
            <person name="Velarde J. Jr."/>
            <person name="Pieniazek D."/>
            <person name="Luftig R.B."/>
        </authorList>
    </citation>
    <scope>NUCLEOTIDE SEQUENCE [GENOMIC DNA]</scope>
    <source>
        <strain>Tak</strain>
    </source>
</reference>
<feature type="chain" id="PRO_0000221935" description="Uncharacterized 7.3 kDa protein in 100 kDa protein region">
    <location>
        <begin position="1"/>
        <end position="65"/>
    </location>
</feature>
<feature type="region of interest" description="Disordered" evidence="1">
    <location>
        <begin position="1"/>
        <end position="30"/>
    </location>
</feature>
<feature type="compositionally biased region" description="Pro residues" evidence="1">
    <location>
        <begin position="10"/>
        <end position="23"/>
    </location>
</feature>
<name>YL14_ADE41</name>
<organism>
    <name type="scientific">Human adenovirus F serotype 41</name>
    <name type="common">HAdV-41</name>
    <name type="synonym">Human adenovirus 41</name>
    <dbReference type="NCBI Taxonomy" id="10524"/>
    <lineage>
        <taxon>Viruses</taxon>
        <taxon>Varidnaviria</taxon>
        <taxon>Bamfordvirae</taxon>
        <taxon>Preplasmiviricota</taxon>
        <taxon>Tectiliviricetes</taxon>
        <taxon>Rowavirales</taxon>
        <taxon>Adenoviridae</taxon>
        <taxon>Mastadenovirus</taxon>
        <taxon>Human mastadenovirus F</taxon>
    </lineage>
</organism>
<accession>P23691</accession>
<sequence length="65" mass="7343">MPAASLESLLPPPPGKLPSPPLRPHGKFQRRRIARMPLPLQPLHTPPLFGLQYRAAQRNPSDRYL</sequence>
<proteinExistence type="predicted"/>
<dbReference type="EMBL" id="X52532">
    <property type="protein sequence ID" value="CAA36764.1"/>
    <property type="molecule type" value="Genomic_DNA"/>
</dbReference>
<dbReference type="PIR" id="S10211">
    <property type="entry name" value="S10211"/>
</dbReference>